<organism>
    <name type="scientific">Klebsiella pneumoniae</name>
    <dbReference type="NCBI Taxonomy" id="573"/>
    <lineage>
        <taxon>Bacteria</taxon>
        <taxon>Pseudomonadati</taxon>
        <taxon>Pseudomonadota</taxon>
        <taxon>Gammaproteobacteria</taxon>
        <taxon>Enterobacterales</taxon>
        <taxon>Enterobacteriaceae</taxon>
        <taxon>Klebsiella/Raoultella group</taxon>
        <taxon>Klebsiella</taxon>
        <taxon>Klebsiella pneumoniae complex</taxon>
    </lineage>
</organism>
<accession>P31602</accession>
<comment type="function">
    <text evidence="2 4 5 6 10 11 14">Secondary active transporter that catalyzes the uptake of citrate across the membrane with the concomitant uptake of sodium (PubMed:10985744, PubMed:12911322, PubMed:1577734, PubMed:1629151, PubMed:8125105, PubMed:8547237). There are conflicting data regarding exact substrate stoichiometry: the sodium/citrate stoichiometry was predicted to be 1, but the latest studies suggest that CitS transports citrate in symport with 2 sodium ions (PubMed:12911322, PubMed:1629151, PubMed:8125105, PubMed:8547237). Transports citrate as a divalent citrate anion, H-citrate(2-) (PubMed:10985744, PubMed:1629151, PubMed:8547237). Shows narrow substrate specificity and is very specific, transporting only citrate and to a low extent citromalate (PubMed:9218448). Symport of Na(+) is absolutely required in the range pH 5-7 because no uptake can be detected in the absence of Na(+) (PubMed:12911322, PubMed:8125105). Lithium can replace Na(+) in the symport reaction but it takes about a 200-fold higher concentration of Li(+) over Na(+) to achieve the same rate of uptake (PubMed:8125105).</text>
</comment>
<comment type="catalytic activity">
    <reaction evidence="4 10">
        <text>citrate(out) + 2 Na(+)(out) = citrate(in) + 2 Na(+)(in)</text>
        <dbReference type="Rhea" id="RHEA:79471"/>
        <dbReference type="ChEBI" id="CHEBI:16947"/>
        <dbReference type="ChEBI" id="CHEBI:29101"/>
    </reaction>
    <physiologicalReaction direction="left-to-right" evidence="4 10">
        <dbReference type="Rhea" id="RHEA:79472"/>
    </physiologicalReaction>
</comment>
<comment type="activity regulation">
    <text evidence="4 10">In the absence of Na(+), transport is inhibited by the thiol reagents N-ethylmaleimide (NEM) and the methanethiosulfonate (MTS) derivatives MTSEA, MTSET and MTSES (PubMed:12911322). However, inactivation by NEM, MTSES and MTSET is prevented by the presence of Na(+) (PubMed:12911322). In the absence of Na(+), the substrate citrate has no effect on the inactivation by permeable or impermeable thiol reagents (PubMed:12911322). In contrast, when subsaturating concentrations of Na(+) are present, citrate significantly reduces inactivation, suggesting ordered binding of the substrate and co-ion; citrate is bound after Na(+) (PubMed:12911322). The membrane impermeable bulky maleimide AmdiS does not inactivate the transporter in right-side-out membrane vesicles (PubMed:12911322). The apparent affinity for Na(+) decreases with increasing proton concentration (PubMed:8125105). Protons cannot replace Na(+) in the translocation step but the decrease in apparent affinity for Na(+) towards lower pH suggests that protons can compete with Na(+) for the cation-binding sites (PubMed:8125105).</text>
</comment>
<comment type="biophysicochemical properties">
    <kinetics>
        <KM evidence="2">7.9 mM for citrate (in whole-cell assay system)</KM>
        <KM evidence="2">5.2 mM for citrate (in the proteoliposomal system)</KM>
        <Vmax evidence="6">8.2 nmol/min/mg enzyme (at pH 5.5)</Vmax>
        <Vmax evidence="6">8.3 nmol/min/mg enzyme (at pH 6.0)</Vmax>
        <Vmax evidence="6">8.2 nmol/min/mg enzyme (at pH 6.5)</Vmax>
        <Vmax evidence="6">6.6 nmol/min/mg enzyme (at pH 7.0)</Vmax>
        <Vmax evidence="2">230.0 pmol/min/mg enzyme with citrate as substrate (in whole-cell assay system)</Vmax>
        <Vmax evidence="2">384.0 pmol/min/mg enzyme with citrate as substrate (in the proteoliposomal system)</Vmax>
        <Vmax evidence="2">263.0 pmol/min/mg enzyme with Na(+) as substrate (in whole-cell assay system)</Vmax>
    </kinetics>
</comment>
<comment type="subunit">
    <text evidence="7 8 9 11">Homodimer.</text>
</comment>
<comment type="subcellular location">
    <subcellularLocation>
        <location evidence="1 9 13">Cell inner membrane</location>
        <topology evidence="1 9 13">Multi-pass membrane protein</topology>
    </subcellularLocation>
</comment>
<comment type="induction">
    <text evidence="3 12 15">Induced under anaerobic conditions in the presence of citrate and Na(+) (PubMed:11514506, PubMed:8748036). Expression is regulated by the two-component regulatory system CitA/CitB (PubMed:8748036, PubMed:9223636). Is also subject to catabolite repression under anaerobic, fermentative conditions, via the cyclic AMP (cAMP) receptor protein (CRP) (PubMed:11514506).</text>
</comment>
<comment type="domain">
    <text evidence="7 8 9">Each monomer has 13 alpha-helical transmembrane segments (TMs) (PubMed:22349493, PubMed:23810698, PubMed:28566738). Of the 13 alpha helices, 11 are single membrane-spanning helices and 2 are helical re-entrant loops (or helical hairpins (HP)) (PubMed:22349493, PubMed:23810698, PubMed:28566738). The protomer is formed by homologous N-terminal and C-terminal halves with inverted topology, each containing 5 transmembrane helices and 1 helical hairpin (PubMed:22349493, PubMed:28566738). A large cytoplasmic loop connects the N-terminal and C-terminal halves (PubMed:22349493, PubMed:28566738). The N-terminal transmembrane helice (TM 1) is not involved in either of the two halves (PubMed:22349493, PubMed:28566738).</text>
</comment>
<comment type="domain">
    <text evidence="9">The protomer can be divided into 2 domains: a central dimerization domain (TM 1-4 and 8-10) critical for formation of the dimeric structure, and a peripheral transport domain (TM 5-7 and 11-13) containing residues needed for interaction with citrate and sodium ions (PubMed:28566738). The dimerization domain remains stationary throughout the transport cycle due to a hydrogen bond network as well as extensive hydrophobic interactions (PubMed:28566738). In contrast, the transport domain undergoes a rotation and a translocation perpendicular to the membrane to expose the substrate-binding site alternately to either side of the membrane (PubMed:28566738). The activity may involve an elevator-like movement (i.e. up and down) in which the transport domain itself traverses the lipid bilayer, carrying the substrate into the cell in a sodium-dependent manner (PubMed:28566738).</text>
</comment>
<comment type="domain">
    <text evidence="11">Contains 2 binding sites for citrate, which are exposed to opposite sides of the membrane: one with low and one with high affinity (PubMed:8547237). The high affinity binding site of the carrier is exposed to the outside (PubMed:8547237).</text>
</comment>
<comment type="miscellaneous">
    <text evidence="21 22">Allows the cell to use citrate as sole carbon and energy source in anaerobic conditions.</text>
</comment>
<comment type="similarity">
    <text evidence="20">Belongs to the 2-hydroxycarboxylate transporter (2-HCT) (TC 2.A.24) family.</text>
</comment>
<evidence type="ECO:0000269" key="1">
    <source>
    </source>
</evidence>
<evidence type="ECO:0000269" key="2">
    <source>
    </source>
</evidence>
<evidence type="ECO:0000269" key="3">
    <source>
    </source>
</evidence>
<evidence type="ECO:0000269" key="4">
    <source>
    </source>
</evidence>
<evidence type="ECO:0000269" key="5">
    <source>
    </source>
</evidence>
<evidence type="ECO:0000269" key="6">
    <source>
    </source>
</evidence>
<evidence type="ECO:0000269" key="7">
    <source>
    </source>
</evidence>
<evidence type="ECO:0000269" key="8">
    <source>
    </source>
</evidence>
<evidence type="ECO:0000269" key="9">
    <source>
    </source>
</evidence>
<evidence type="ECO:0000269" key="10">
    <source>
    </source>
</evidence>
<evidence type="ECO:0000269" key="11">
    <source>
    </source>
</evidence>
<evidence type="ECO:0000269" key="12">
    <source>
    </source>
</evidence>
<evidence type="ECO:0000269" key="13">
    <source>
    </source>
</evidence>
<evidence type="ECO:0000269" key="14">
    <source>
    </source>
</evidence>
<evidence type="ECO:0000269" key="15">
    <source>
    </source>
</evidence>
<evidence type="ECO:0000303" key="16">
    <source>
    </source>
</evidence>
<evidence type="ECO:0000303" key="17">
    <source>
    </source>
</evidence>
<evidence type="ECO:0000303" key="18">
    <source>
    </source>
</evidence>
<evidence type="ECO:0000303" key="19">
    <source>
    </source>
</evidence>
<evidence type="ECO:0000305" key="20"/>
<evidence type="ECO:0000305" key="21">
    <source>
    </source>
</evidence>
<evidence type="ECO:0000305" key="22">
    <source>
    </source>
</evidence>
<evidence type="ECO:0007744" key="23">
    <source>
        <dbReference type="PDB" id="5X9R"/>
    </source>
</evidence>
<evidence type="ECO:0007744" key="24">
    <source>
        <dbReference type="PDB" id="5XAR"/>
    </source>
</evidence>
<evidence type="ECO:0007744" key="25">
    <source>
        <dbReference type="PDB" id="5XAS"/>
    </source>
</evidence>
<evidence type="ECO:0007744" key="26">
    <source>
        <dbReference type="PDB" id="5XAT"/>
    </source>
</evidence>
<evidence type="ECO:0007829" key="27">
    <source>
        <dbReference type="PDB" id="5XAS"/>
    </source>
</evidence>
<feature type="chain" id="PRO_0000088755" description="Citrate/sodium symporter">
    <location>
        <begin position="1"/>
        <end position="446"/>
    </location>
</feature>
<feature type="topological domain" description="Cytoplasmic" evidence="9 13 25">
    <location>
        <begin position="1"/>
        <end position="27"/>
    </location>
</feature>
<feature type="transmembrane region" description="Helical; Name=TM 1" evidence="9 25">
    <location>
        <begin position="28"/>
        <end position="44"/>
    </location>
</feature>
<feature type="topological domain" description="Periplasmic" evidence="9 25">
    <location>
        <begin position="45"/>
        <end position="50"/>
    </location>
</feature>
<feature type="transmembrane region" description="Helical; Name=TM 2" evidence="9 25">
    <location>
        <begin position="51"/>
        <end position="71"/>
    </location>
</feature>
<feature type="topological domain" description="Cytoplasmic" evidence="9 25">
    <location>
        <begin position="72"/>
        <end position="80"/>
    </location>
</feature>
<feature type="transmembrane region" description="Helical; Name=TM 3" evidence="9 25">
    <location>
        <begin position="81"/>
        <end position="95"/>
    </location>
</feature>
<feature type="topological domain" description="Periplasmic" evidence="9 25">
    <location>
        <begin position="96"/>
        <end position="115"/>
    </location>
</feature>
<feature type="transmembrane region" description="Helical; Name=TM 4" evidence="9 25">
    <location>
        <begin position="116"/>
        <end position="130"/>
    </location>
</feature>
<feature type="topological domain" description="Cytoplasmic" evidence="9 25">
    <location>
        <begin position="131"/>
        <end position="136"/>
    </location>
</feature>
<feature type="transmembrane region" description="Helical; Name=TM 5" evidence="9 25">
    <location>
        <begin position="137"/>
        <end position="166"/>
    </location>
</feature>
<feature type="topological domain" description="Periplasmic" evidence="1 9 25">
    <location>
        <begin position="167"/>
        <end position="181"/>
    </location>
</feature>
<feature type="intramembrane region" description="Helical; Name=TM 6 (HP1)" evidence="9 25">
    <location>
        <begin position="182"/>
        <end position="189"/>
    </location>
</feature>
<feature type="topological domain" description="Periplasmic" evidence="1 9 25">
    <location>
        <begin position="190"/>
        <end position="212"/>
    </location>
</feature>
<feature type="transmembrane region" description="Helical; Name=TM 7" evidence="9 25">
    <location>
        <begin position="213"/>
        <end position="233"/>
    </location>
</feature>
<feature type="topological domain" description="Cytoplasmic" evidence="1 9 25">
    <location>
        <begin position="234"/>
        <end position="264"/>
    </location>
</feature>
<feature type="transmembrane region" description="Helical; Name=TM 8" evidence="9 25">
    <location>
        <begin position="265"/>
        <end position="287"/>
    </location>
</feature>
<feature type="topological domain" description="Periplasmic" evidence="9 25">
    <location>
        <begin position="288"/>
        <end position="299"/>
    </location>
</feature>
<feature type="transmembrane region" description="Helical; Name=TM 9" evidence="9 25">
    <location>
        <begin position="300"/>
        <end position="315"/>
    </location>
</feature>
<feature type="topological domain" description="Cytoplasmic" evidence="9 25">
    <location>
        <begin position="316"/>
        <end position="327"/>
    </location>
</feature>
<feature type="transmembrane region" description="Helical; Name=TM 10" evidence="9 25">
    <location>
        <begin position="328"/>
        <end position="351"/>
    </location>
</feature>
<feature type="topological domain" description="Periplasmic" evidence="9 25">
    <location>
        <begin position="352"/>
        <end position="359"/>
    </location>
</feature>
<feature type="transmembrane region" description="Helical; Name=TM 11" evidence="9 25">
    <location>
        <begin position="360"/>
        <end position="381"/>
    </location>
</feature>
<feature type="topological domain" description="Cytoplasmic" evidence="1 9 25">
    <location>
        <begin position="382"/>
        <end position="398"/>
    </location>
</feature>
<feature type="intramembrane region" description="Helical; Name=TM 12 (HP2)" evidence="9 25">
    <location>
        <begin position="399"/>
        <end position="406"/>
    </location>
</feature>
<feature type="topological domain" description="Cytoplasmic" evidence="1 9 25">
    <location>
        <begin position="407"/>
        <end position="416"/>
    </location>
</feature>
<feature type="transmembrane region" description="Helical; Name=TM 13" evidence="9 25">
    <location>
        <begin position="417"/>
        <end position="438"/>
    </location>
</feature>
<feature type="topological domain" description="Periplasmic" evidence="9 13 25">
    <location>
        <begin position="439"/>
        <end position="446"/>
    </location>
</feature>
<feature type="binding site" evidence="9 24 25 26">
    <location>
        <position position="181"/>
    </location>
    <ligand>
        <name>Na(+)</name>
        <dbReference type="ChEBI" id="CHEBI:29101"/>
    </ligand>
</feature>
<feature type="binding site" evidence="9 24 25 26">
    <location>
        <position position="183"/>
    </location>
    <ligand>
        <name>Na(+)</name>
        <dbReference type="ChEBI" id="CHEBI:29101"/>
    </ligand>
</feature>
<feature type="binding site" evidence="9 23 25 26">
    <location>
        <position position="186"/>
    </location>
    <ligand>
        <name>citrate</name>
        <dbReference type="ChEBI" id="CHEBI:16947"/>
    </ligand>
</feature>
<feature type="binding site" evidence="9 23 25 26">
    <location>
        <position position="187"/>
    </location>
    <ligand>
        <name>citrate</name>
        <dbReference type="ChEBI" id="CHEBI:16947"/>
    </ligand>
</feature>
<feature type="binding site" evidence="9 24 25 26">
    <location>
        <position position="399"/>
    </location>
    <ligand>
        <name>Na(+)</name>
        <dbReference type="ChEBI" id="CHEBI:29101"/>
    </ligand>
</feature>
<feature type="binding site" evidence="9 24 25 26">
    <location>
        <position position="401"/>
    </location>
    <ligand>
        <name>Na(+)</name>
        <dbReference type="ChEBI" id="CHEBI:29101"/>
    </ligand>
</feature>
<feature type="binding site" evidence="9 23 25 26">
    <location>
        <position position="402"/>
    </location>
    <ligand>
        <name>citrate</name>
        <dbReference type="ChEBI" id="CHEBI:16947"/>
    </ligand>
</feature>
<feature type="binding site" evidence="9 23 25 26">
    <location>
        <position position="404"/>
    </location>
    <ligand>
        <name>citrate</name>
        <dbReference type="ChEBI" id="CHEBI:16947"/>
    </ligand>
</feature>
<feature type="binding site" evidence="9 23 25 26">
    <location>
        <position position="405"/>
    </location>
    <ligand>
        <name>citrate</name>
        <dbReference type="ChEBI" id="CHEBI:16947"/>
    </ligand>
</feature>
<feature type="binding site" evidence="9 23 25 26">
    <location>
        <position position="428"/>
    </location>
    <ligand>
        <name>citrate</name>
        <dbReference type="ChEBI" id="CHEBI:16947"/>
    </ligand>
</feature>
<feature type="mutagenesis site" description="9-fold increase in KM for citrate, but no change in Vmax. The effect of Na(+) on the transport kinetics are comparable to the wild-type." evidence="2">
    <original>N</original>
    <variation>V</variation>
    <location>
        <position position="186"/>
    </location>
</feature>
<feature type="mutagenesis site" description="Almost no effect on the kinetics of Na(+) or citrate transport." evidence="2">
    <original>E</original>
    <variation>Q</variation>
    <location>
        <position position="195"/>
    </location>
</feature>
<feature type="mutagenesis site" description="Retains 79% of specific activity, response to various thiol reagents is not affected; when associated with S-317 and S-347." evidence="4">
    <original>C</original>
    <variation>S</variation>
    <location>
        <position position="278"/>
    </location>
</feature>
<feature type="mutagenesis site" description="Retains 79% of specific activity, response to various thiol reagents is not affected; when associated with S-278 and S-347." evidence="4">
    <original>C</original>
    <variation>S</variation>
    <location>
        <position position="317"/>
    </location>
</feature>
<feature type="mutagenesis site" description="Retains 79% of specific activity, response to various thiol reagents is not affected; when associated with S-278 and S-317." evidence="4">
    <original>C</original>
    <variation>S</variation>
    <location>
        <position position="347"/>
    </location>
</feature>
<feature type="mutagenesis site" description="Retains 56% of specific activity and is quite insensitive to NEM, MTSET and MTSES; when associated with S-414." evidence="4">
    <original>C</original>
    <variation>S</variation>
    <location>
        <position position="398"/>
    </location>
</feature>
<feature type="mutagenesis site" description="Retains 56% of specific activity and is quite insensitive to NEM, MTSET and MTSES; when associated with S-398." evidence="4">
    <original>C</original>
    <variation>S</variation>
    <location>
        <position position="414"/>
    </location>
</feature>
<feature type="helix" evidence="27">
    <location>
        <begin position="17"/>
        <end position="20"/>
    </location>
</feature>
<feature type="strand" evidence="27">
    <location>
        <begin position="24"/>
        <end position="26"/>
    </location>
</feature>
<feature type="helix" evidence="27">
    <location>
        <begin position="28"/>
        <end position="43"/>
    </location>
</feature>
<feature type="helix" evidence="27">
    <location>
        <begin position="51"/>
        <end position="71"/>
    </location>
</feature>
<feature type="turn" evidence="27">
    <location>
        <begin position="73"/>
        <end position="75"/>
    </location>
</feature>
<feature type="helix" evidence="27">
    <location>
        <begin position="78"/>
        <end position="81"/>
    </location>
</feature>
<feature type="helix" evidence="27">
    <location>
        <begin position="83"/>
        <end position="95"/>
    </location>
</feature>
<feature type="helix" evidence="27">
    <location>
        <begin position="101"/>
        <end position="111"/>
    </location>
</feature>
<feature type="helix" evidence="27">
    <location>
        <begin position="116"/>
        <end position="131"/>
    </location>
</feature>
<feature type="helix" evidence="27">
    <location>
        <begin position="137"/>
        <end position="165"/>
    </location>
</feature>
<feature type="helix" evidence="27">
    <location>
        <begin position="170"/>
        <end position="176"/>
    </location>
</feature>
<feature type="helix" evidence="27">
    <location>
        <begin position="178"/>
        <end position="182"/>
    </location>
</feature>
<feature type="helix" evidence="27">
    <location>
        <begin position="185"/>
        <end position="188"/>
    </location>
</feature>
<feature type="helix" evidence="27">
    <location>
        <begin position="190"/>
        <end position="200"/>
    </location>
</feature>
<feature type="helix" evidence="27">
    <location>
        <begin position="205"/>
        <end position="236"/>
    </location>
</feature>
<feature type="turn" evidence="27">
    <location>
        <begin position="238"/>
        <end position="240"/>
    </location>
</feature>
<feature type="helix" evidence="27">
    <location>
        <begin position="265"/>
        <end position="288"/>
    </location>
</feature>
<feature type="strand" evidence="27">
    <location>
        <begin position="293"/>
        <end position="296"/>
    </location>
</feature>
<feature type="helix" evidence="27">
    <location>
        <begin position="300"/>
        <end position="314"/>
    </location>
</feature>
<feature type="helix" evidence="27">
    <location>
        <begin position="319"/>
        <end position="334"/>
    </location>
</feature>
<feature type="helix" evidence="27">
    <location>
        <begin position="337"/>
        <end position="347"/>
    </location>
</feature>
<feature type="helix" evidence="27">
    <location>
        <begin position="351"/>
        <end position="355"/>
    </location>
</feature>
<feature type="helix" evidence="27">
    <location>
        <begin position="360"/>
        <end position="384"/>
    </location>
</feature>
<feature type="helix" evidence="27">
    <location>
        <begin position="388"/>
        <end position="394"/>
    </location>
</feature>
<feature type="helix" evidence="27">
    <location>
        <begin position="397"/>
        <end position="400"/>
    </location>
</feature>
<feature type="helix" evidence="27">
    <location>
        <begin position="403"/>
        <end position="413"/>
    </location>
</feature>
<feature type="helix" evidence="27">
    <location>
        <begin position="417"/>
        <end position="419"/>
    </location>
</feature>
<feature type="helix" evidence="27">
    <location>
        <begin position="420"/>
        <end position="445"/>
    </location>
</feature>
<name>CITN_KLEPN</name>
<geneLocation type="plasmid" evidence="17">
    <name>pES3</name>
</geneLocation>
<gene>
    <name evidence="17" type="primary">citS</name>
</gene>
<protein>
    <recommendedName>
        <fullName evidence="18">Citrate/sodium symporter</fullName>
    </recommendedName>
    <alternativeName>
        <fullName evidence="16">Citrate transporter CitS</fullName>
    </alternativeName>
    <alternativeName>
        <fullName evidence="19">Na(+)-dependent citrate carrier</fullName>
    </alternativeName>
    <alternativeName>
        <fullName evidence="17">Sodium-dependent citrate transport system</fullName>
    </alternativeName>
</protein>
<keyword id="KW-0002">3D-structure</keyword>
<keyword id="KW-0997">Cell inner membrane</keyword>
<keyword id="KW-1003">Cell membrane</keyword>
<keyword id="KW-0163">Citrate utilization</keyword>
<keyword id="KW-0406">Ion transport</keyword>
<keyword id="KW-0472">Membrane</keyword>
<keyword id="KW-0479">Metal-binding</keyword>
<keyword id="KW-0614">Plasmid</keyword>
<keyword id="KW-0915">Sodium</keyword>
<keyword id="KW-0739">Sodium transport</keyword>
<keyword id="KW-0769">Symport</keyword>
<keyword id="KW-0812">Transmembrane</keyword>
<keyword id="KW-1133">Transmembrane helix</keyword>
<keyword id="KW-0813">Transport</keyword>
<dbReference type="EMBL" id="M83146">
    <property type="protein sequence ID" value="AAA25060.1"/>
    <property type="molecule type" value="Genomic_DNA"/>
</dbReference>
<dbReference type="PIR" id="A38244">
    <property type="entry name" value="A38244"/>
</dbReference>
<dbReference type="PDB" id="5X9R">
    <property type="method" value="X-ray"/>
    <property type="resolution" value="3.98 A"/>
    <property type="chains" value="A/B=13-446"/>
</dbReference>
<dbReference type="PDB" id="5XAR">
    <property type="method" value="X-ray"/>
    <property type="resolution" value="3.62 A"/>
    <property type="chains" value="A/B/C/D=13-446"/>
</dbReference>
<dbReference type="PDB" id="5XAS">
    <property type="method" value="X-ray"/>
    <property type="resolution" value="3.47 A"/>
    <property type="chains" value="A/B=13-446"/>
</dbReference>
<dbReference type="PDB" id="5XAT">
    <property type="method" value="X-ray"/>
    <property type="resolution" value="3.76 A"/>
    <property type="chains" value="A/B/C/D=13-446"/>
</dbReference>
<dbReference type="PDB" id="9LSH">
    <property type="method" value="EM"/>
    <property type="resolution" value="3.80 A"/>
    <property type="chains" value="A/B=1-446"/>
</dbReference>
<dbReference type="PDB" id="9LSI">
    <property type="method" value="EM"/>
    <property type="resolution" value="3.30 A"/>
    <property type="chains" value="A/B=1-446"/>
</dbReference>
<dbReference type="PDB" id="9LSJ">
    <property type="method" value="EM"/>
    <property type="resolution" value="3.10 A"/>
    <property type="chains" value="A/B=1-446"/>
</dbReference>
<dbReference type="PDB" id="9LSK">
    <property type="method" value="EM"/>
    <property type="resolution" value="2.90 A"/>
    <property type="chains" value="A/B=1-446"/>
</dbReference>
<dbReference type="PDBsum" id="5X9R"/>
<dbReference type="PDBsum" id="5XAR"/>
<dbReference type="PDBsum" id="5XAS"/>
<dbReference type="PDBsum" id="5XAT"/>
<dbReference type="PDBsum" id="9LSH"/>
<dbReference type="PDBsum" id="9LSI"/>
<dbReference type="PDBsum" id="9LSJ"/>
<dbReference type="PDBsum" id="9LSK"/>
<dbReference type="EMDB" id="EMD-63355"/>
<dbReference type="EMDB" id="EMD-63356"/>
<dbReference type="EMDB" id="EMD-63357"/>
<dbReference type="EMDB" id="EMD-63358"/>
<dbReference type="SMR" id="P31602"/>
<dbReference type="DIP" id="DIP-60559N"/>
<dbReference type="TCDB" id="2.A.24.1.1">
    <property type="family name" value="the 2-hydroxycarboxylate transporter (2-hct) family"/>
</dbReference>
<dbReference type="ABCD" id="P31602">
    <property type="antibodies" value="1 sequenced antibody"/>
</dbReference>
<dbReference type="GO" id="GO:0005886">
    <property type="term" value="C:plasma membrane"/>
    <property type="evidence" value="ECO:0007669"/>
    <property type="project" value="UniProtKB-SubCell"/>
</dbReference>
<dbReference type="GO" id="GO:0046872">
    <property type="term" value="F:metal ion binding"/>
    <property type="evidence" value="ECO:0007669"/>
    <property type="project" value="UniProtKB-KW"/>
</dbReference>
<dbReference type="GO" id="GO:0008514">
    <property type="term" value="F:organic anion transmembrane transporter activity"/>
    <property type="evidence" value="ECO:0007669"/>
    <property type="project" value="InterPro"/>
</dbReference>
<dbReference type="GO" id="GO:0015293">
    <property type="term" value="F:symporter activity"/>
    <property type="evidence" value="ECO:0007669"/>
    <property type="project" value="UniProtKB-KW"/>
</dbReference>
<dbReference type="GO" id="GO:0006101">
    <property type="term" value="P:citrate metabolic process"/>
    <property type="evidence" value="ECO:0007669"/>
    <property type="project" value="UniProtKB-KW"/>
</dbReference>
<dbReference type="GO" id="GO:0006814">
    <property type="term" value="P:sodium ion transport"/>
    <property type="evidence" value="ECO:0007669"/>
    <property type="project" value="UniProtKB-KW"/>
</dbReference>
<dbReference type="InterPro" id="IPR018025">
    <property type="entry name" value="2-OHcarbox_trans_Prot/Firm"/>
</dbReference>
<dbReference type="InterPro" id="IPR004679">
    <property type="entry name" value="2-OHcarboxylate_transport"/>
</dbReference>
<dbReference type="NCBIfam" id="TIGR00783">
    <property type="entry name" value="ccs"/>
    <property type="match status" value="1"/>
</dbReference>
<dbReference type="PANTHER" id="PTHR40033:SF1">
    <property type="entry name" value="CITRATE-SODIUM SYMPORTER"/>
    <property type="match status" value="1"/>
</dbReference>
<dbReference type="PANTHER" id="PTHR40033">
    <property type="entry name" value="NA(+)-MALATE SYMPORTER"/>
    <property type="match status" value="1"/>
</dbReference>
<dbReference type="Pfam" id="PF03390">
    <property type="entry name" value="2HCT"/>
    <property type="match status" value="1"/>
</dbReference>
<dbReference type="PIRSF" id="PIRSF005348">
    <property type="entry name" value="YxkH"/>
    <property type="match status" value="1"/>
</dbReference>
<sequence length="446" mass="47558">MTNMSQPPATEKKGVSDLLGFKIFGMPLPLYAFALITLLLSHFYNALPTDIVGGFAIMFIIGAIFGEIGKRLPIFNKYIGGAPVMIFLVAAYFVYAGIFTQKEIDAISNVMDKSNFLNLFIAVLITGAILSVNRRLLLKSLLGYIPTILMGIVGASIFGIAIGLVFGIPVDRIMMLYVLPIMGGGNGAGAVPLSEIYHSVTGRSREEYYSTAIAILTIANIFAIVFAAVLDIIGKKHTWLSGEGELVRKASFKVEEDEKTGQITHRETAVGLVLSTTCFLLAYVVAKKILPSIGGVAIHYFAWMVLIVAALNASGLCSPEIKAGAKRLSDFFSKQLLWVLMVGVGVCYTDLQEIINAITFANVVIAAIIVIGAVLGAAIGGWLMGFFPIESAITAGLCMANRGGSGDLEVLSACNRMNLISYAQISSRLGGGIVLVIASIVFGMMI</sequence>
<proteinExistence type="evidence at protein level"/>
<reference key="1">
    <citation type="journal article" date="1992" name="J. Biol. Chem.">
        <title>Nucleotide sequence and functional properties of a sodium-dependent citrate transport system from Klebsiella pneumoniae.</title>
        <authorList>
            <person name="van der Rest M.E."/>
            <person name="Siewe R.M."/>
            <person name="Abee T."/>
            <person name="Schwarz E."/>
            <person name="Oesterhelt D."/>
            <person name="Konings W.N."/>
        </authorList>
    </citation>
    <scope>NUCLEOTIDE SEQUENCE [GENOMIC DNA]</scope>
    <scope>FUNCTION</scope>
    <source>
        <strain>ATCC 13882 / NBRC 13541 / NCTC 8172</strain>
    </source>
</reference>
<reference key="2">
    <citation type="journal article" date="1992" name="J. Bacteriol.">
        <title>Mechanism of Na(+)-dependent citrate transport in Klebsiella pneumoniae.</title>
        <authorList>
            <person name="van der Rest M.E."/>
            <person name="Molenaar D."/>
            <person name="Konings W.N."/>
        </authorList>
    </citation>
    <scope>FUNCTION</scope>
    <scope>BIOPHYSICOCHEMICAL PROPERTIES</scope>
    <source>
        <strain>ATCC 13882 / NBRC 13541 / NCTC 8172</strain>
    </source>
</reference>
<reference key="3">
    <citation type="journal article" date="1994" name="Eur. J. Biochem.">
        <title>Transport of citrate catalyzed by the sodium-dependent citrate carrier of Klebsiella pneumoniae is obligatorily coupled to the transport of two sodium ions.</title>
        <authorList>
            <person name="Lolkema J.S."/>
            <person name="Enequist H."/>
            <person name="van der Rest M.E."/>
        </authorList>
    </citation>
    <scope>FUNCTION</scope>
    <scope>TRANSPORTER ACTIVITY</scope>
    <scope>ACTIVITY REGULATION</scope>
</reference>
<reference key="4">
    <citation type="journal article" date="1995" name="Mol. Microbiol.">
        <title>Regulation of anaerobic citrate metabolism in Klebsiella pneumoniae.</title>
        <authorList>
            <person name="Bott M."/>
            <person name="Meyer M."/>
            <person name="Dimroth P."/>
        </authorList>
    </citation>
    <scope>TRANSCRIPTIONAL REGULATION</scope>
    <source>
        <strain>ATCC 13882 / NBRC 13541 / NCTC 8172</strain>
    </source>
</reference>
<reference key="5">
    <citation type="journal article" date="1996" name="Biochemistry">
        <title>Functional properties of the purified Na(+)-dependent citrate carrier of Klebsiella pneumoniae: evidence for asymmetric orientation of the carrier protein in proteoliposomes.</title>
        <authorList>
            <person name="Pos K.M."/>
            <person name="Dimroth P."/>
        </authorList>
    </citation>
    <scope>FUNCTION</scope>
    <scope>SUBUNIT</scope>
    <scope>DOMAIN</scope>
</reference>
<reference key="6">
    <citation type="journal article" date="1996" name="J. Biol. Chem.">
        <title>Membrane topology of the sodium ion-dependent citrate carrier of Klebsiella pneumoniae. Evidence for a new structural class of secondary transporters.</title>
        <authorList>
            <person name="van Geest M."/>
            <person name="Lolkema J.S."/>
        </authorList>
    </citation>
    <scope>SUBCELLULAR LOCATION</scope>
    <scope>TOPOLOGY</scope>
</reference>
<reference key="7">
    <citation type="journal article" date="1997" name="J. Biol. Chem.">
        <title>Membrane potential-generating malate (MleP) and citrate (CitP) transporters of lactic acid bacteria are homologous proteins. Substrate specificity of the 2-hydroxycarboxylate transporter family.</title>
        <authorList>
            <person name="Bandell M."/>
            <person name="Ansanay V."/>
            <person name="Rachidi N."/>
            <person name="Dequin S."/>
            <person name="Lolkema J.S."/>
        </authorList>
    </citation>
    <scope>FUNCTION</scope>
</reference>
<reference key="8">
    <citation type="journal article" date="1997" name="J. Mol. Biol.">
        <title>In vitro binding of the response regulator CitB and of its carboxy-terminal domain to A + T-rich DNA target sequences in the control region of the divergent citC and citS operons of Klebsiella pneumoniae.</title>
        <authorList>
            <person name="Meyer M."/>
            <person name="Dimroth P."/>
            <person name="Bott M."/>
        </authorList>
    </citation>
    <scope>TRANSCRIPTIONAL REGULATION</scope>
    <source>
        <strain>ATCC 13882 / NBRC 13541 / NCTC 8172</strain>
    </source>
</reference>
<reference key="9">
    <citation type="journal article" date="2000" name="Arch. Microbiol.">
        <title>The Na+-dependent citrate carrier of Klebsiella pneumoniae: high-level expression and site-directed mutagenesis of asparagine-185 and glutamate-194.</title>
        <authorList>
            <person name="Kaestner C.N."/>
            <person name="Dimroth P."/>
            <person name="Pos K.M."/>
        </authorList>
    </citation>
    <scope>FUNCTION</scope>
    <scope>BIOPHYSICOCHEMICAL PROPERTIES</scope>
    <scope>MUTAGENESIS OF ASN-186 AND GLU-195</scope>
</reference>
<reference key="10">
    <citation type="journal article" date="2000" name="Biochim. Biophys. Acta">
        <title>Membrane topology of the Na(+)/citrate transporter CitS of Klebsiella pneumoniae by insertion mutagenesis.</title>
        <authorList>
            <person name="van Geest M."/>
            <person name="Lolkema J.S."/>
        </authorList>
    </citation>
    <scope>SUBCELLULAR LOCATION</scope>
    <scope>TOPOLOGY</scope>
</reference>
<reference key="11">
    <citation type="journal article" date="2001" name="J. Bacteriol.">
        <title>Catabolite repression of the citrate fermentation genes in Klebsiella pneumoniae: evidence for involvement of the cyclic AMP receptor protein.</title>
        <authorList>
            <person name="Meyer M."/>
            <person name="Dimroth P."/>
            <person name="Bott M."/>
        </authorList>
    </citation>
    <scope>TRANSCRIPTIONAL REGULATION</scope>
    <source>
        <strain>ATCC 13882 / NBRC 13541 / NCTC 8172</strain>
    </source>
</reference>
<reference key="12">
    <citation type="journal article" date="2003" name="Biochemistry">
        <title>Accessibility of cysteine residues in a cytoplasmic loop of CitS of Klebsiella pneumoniae is controlled by the catalytic state of the transporter.</title>
        <authorList>
            <person name="Sobczak I."/>
            <person name="Lolkema J.S."/>
        </authorList>
    </citation>
    <scope>FUNCTION</scope>
    <scope>TRANSPORTER ACTIVITY</scope>
    <scope>ACTIVITY REGULATION</scope>
    <scope>MUTAGENESIS OF CYS-278; CYS-317; CYS-347; CYS-398 AND CYS-414</scope>
</reference>
<reference key="13">
    <citation type="journal article" date="2012" name="J. Mol. Biol.">
        <title>Projection structure of the secondary citrate/sodium symporter CitS at 6 Aa resolution by electron crystallography.</title>
        <authorList>
            <person name="Kebbel F."/>
            <person name="Kurz M."/>
            <person name="Gruetter M.G."/>
            <person name="Stahlberg H."/>
        </authorList>
    </citation>
    <scope>SUBUNIT</scope>
    <scope>DOMAIN</scope>
    <scope>ELECTRON CRYSTALLOGRAPHY</scope>
</reference>
<reference key="14">
    <citation type="journal article" date="2013" name="Structure">
        <title>Structure and substrate-induced conformational changes of the secondary citrate/sodium symporter CitS revealed by electron crystallography.</title>
        <authorList>
            <person name="Kebbel F."/>
            <person name="Kurz M."/>
            <person name="Arheit M."/>
            <person name="Gruetter M.G."/>
            <person name="Stahlberg H."/>
        </authorList>
    </citation>
    <scope>SUBUNIT</scope>
    <scope>DOMAIN</scope>
    <scope>ELECTRON CRYSTALLOGRAPHY</scope>
</reference>
<reference evidence="23 24 25 26" key="15">
    <citation type="journal article" date="2017" name="Sci. Rep.">
        <title>Structural insights into the elevator-like mechanism of the sodium/citrate symporter CitS.</title>
        <authorList>
            <person name="Kim J.W."/>
            <person name="Kim S."/>
            <person name="Kim S."/>
            <person name="Lee H."/>
            <person name="Lee J.O."/>
            <person name="Jin M.S."/>
        </authorList>
    </citation>
    <scope>X-RAY CRYSTALLOGRAPHY (3.47 ANGSTROMS) OF 13-446 IN COMPLEXES WITH CITRATE AND SODIUM</scope>
    <scope>SUBUNIT</scope>
    <scope>SUBCELLULAR LOCATION</scope>
    <scope>TOPOLOGY</scope>
    <scope>DOMAIN</scope>
</reference>